<reference key="1">
    <citation type="journal article" date="2002" name="Nature">
        <title>The genome sequence of Schizosaccharomyces pombe.</title>
        <authorList>
            <person name="Wood V."/>
            <person name="Gwilliam R."/>
            <person name="Rajandream M.A."/>
            <person name="Lyne M.H."/>
            <person name="Lyne R."/>
            <person name="Stewart A."/>
            <person name="Sgouros J.G."/>
            <person name="Peat N."/>
            <person name="Hayles J."/>
            <person name="Baker S.G."/>
            <person name="Basham D."/>
            <person name="Bowman S."/>
            <person name="Brooks K."/>
            <person name="Brown D."/>
            <person name="Brown S."/>
            <person name="Chillingworth T."/>
            <person name="Churcher C.M."/>
            <person name="Collins M."/>
            <person name="Connor R."/>
            <person name="Cronin A."/>
            <person name="Davis P."/>
            <person name="Feltwell T."/>
            <person name="Fraser A."/>
            <person name="Gentles S."/>
            <person name="Goble A."/>
            <person name="Hamlin N."/>
            <person name="Harris D.E."/>
            <person name="Hidalgo J."/>
            <person name="Hodgson G."/>
            <person name="Holroyd S."/>
            <person name="Hornsby T."/>
            <person name="Howarth S."/>
            <person name="Huckle E.J."/>
            <person name="Hunt S."/>
            <person name="Jagels K."/>
            <person name="James K.D."/>
            <person name="Jones L."/>
            <person name="Jones M."/>
            <person name="Leather S."/>
            <person name="McDonald S."/>
            <person name="McLean J."/>
            <person name="Mooney P."/>
            <person name="Moule S."/>
            <person name="Mungall K.L."/>
            <person name="Murphy L.D."/>
            <person name="Niblett D."/>
            <person name="Odell C."/>
            <person name="Oliver K."/>
            <person name="O'Neil S."/>
            <person name="Pearson D."/>
            <person name="Quail M.A."/>
            <person name="Rabbinowitsch E."/>
            <person name="Rutherford K.M."/>
            <person name="Rutter S."/>
            <person name="Saunders D."/>
            <person name="Seeger K."/>
            <person name="Sharp S."/>
            <person name="Skelton J."/>
            <person name="Simmonds M.N."/>
            <person name="Squares R."/>
            <person name="Squares S."/>
            <person name="Stevens K."/>
            <person name="Taylor K."/>
            <person name="Taylor R.G."/>
            <person name="Tivey A."/>
            <person name="Walsh S.V."/>
            <person name="Warren T."/>
            <person name="Whitehead S."/>
            <person name="Woodward J.R."/>
            <person name="Volckaert G."/>
            <person name="Aert R."/>
            <person name="Robben J."/>
            <person name="Grymonprez B."/>
            <person name="Weltjens I."/>
            <person name="Vanstreels E."/>
            <person name="Rieger M."/>
            <person name="Schaefer M."/>
            <person name="Mueller-Auer S."/>
            <person name="Gabel C."/>
            <person name="Fuchs M."/>
            <person name="Duesterhoeft A."/>
            <person name="Fritzc C."/>
            <person name="Holzer E."/>
            <person name="Moestl D."/>
            <person name="Hilbert H."/>
            <person name="Borzym K."/>
            <person name="Langer I."/>
            <person name="Beck A."/>
            <person name="Lehrach H."/>
            <person name="Reinhardt R."/>
            <person name="Pohl T.M."/>
            <person name="Eger P."/>
            <person name="Zimmermann W."/>
            <person name="Wedler H."/>
            <person name="Wambutt R."/>
            <person name="Purnelle B."/>
            <person name="Goffeau A."/>
            <person name="Cadieu E."/>
            <person name="Dreano S."/>
            <person name="Gloux S."/>
            <person name="Lelaure V."/>
            <person name="Mottier S."/>
            <person name="Galibert F."/>
            <person name="Aves S.J."/>
            <person name="Xiang Z."/>
            <person name="Hunt C."/>
            <person name="Moore K."/>
            <person name="Hurst S.M."/>
            <person name="Lucas M."/>
            <person name="Rochet M."/>
            <person name="Gaillardin C."/>
            <person name="Tallada V.A."/>
            <person name="Garzon A."/>
            <person name="Thode G."/>
            <person name="Daga R.R."/>
            <person name="Cruzado L."/>
            <person name="Jimenez J."/>
            <person name="Sanchez M."/>
            <person name="del Rey F."/>
            <person name="Benito J."/>
            <person name="Dominguez A."/>
            <person name="Revuelta J.L."/>
            <person name="Moreno S."/>
            <person name="Armstrong J."/>
            <person name="Forsburg S.L."/>
            <person name="Cerutti L."/>
            <person name="Lowe T."/>
            <person name="McCombie W.R."/>
            <person name="Paulsen I."/>
            <person name="Potashkin J."/>
            <person name="Shpakovski G.V."/>
            <person name="Ussery D."/>
            <person name="Barrell B.G."/>
            <person name="Nurse P."/>
        </authorList>
    </citation>
    <scope>NUCLEOTIDE SEQUENCE [LARGE SCALE GENOMIC DNA]</scope>
    <source>
        <strain>972 / ATCC 24843</strain>
    </source>
</reference>
<reference key="2">
    <citation type="journal article" date="2006" name="Nat. Biotechnol.">
        <title>ORFeome cloning and global analysis of protein localization in the fission yeast Schizosaccharomyces pombe.</title>
        <authorList>
            <person name="Matsuyama A."/>
            <person name="Arai R."/>
            <person name="Yashiroda Y."/>
            <person name="Shirai A."/>
            <person name="Kamata A."/>
            <person name="Sekido S."/>
            <person name="Kobayashi Y."/>
            <person name="Hashimoto A."/>
            <person name="Hamamoto M."/>
            <person name="Hiraoka Y."/>
            <person name="Horinouchi S."/>
            <person name="Yoshida M."/>
        </authorList>
    </citation>
    <scope>SUBCELLULAR LOCATION [LARGE SCALE ANALYSIS]</scope>
</reference>
<proteinExistence type="inferred from homology"/>
<sequence length="318" mass="33250">MINIVVLGSMNTDLVMRTKICPSGGETIHGEPDGFSTGNGGKGANQAVAVARLSNPADTKVSMLGCVGDDAFGVEMLSGLKKDGVNVDNVKKIENKSTGVAMIIVEETGENRILLSEGANGNVDTAFVKAMEQRISTCNLLIMQLEIPLEAVEIALQIAHKHGVDVLMNPAPAIPLSHDMISYCAYLVPNEHEAAILLNQADSPATLENVDAYASKLLSFGVRKAVIITLGSQGAYYKSANGESALVSACKVKAVDTTAAGDTFIGAFSNSIAHGQPLKDSLEFAAKCSAITVQRKGAASSIPSLLEVDGSFNLKKNT</sequence>
<accession>O60116</accession>
<keyword id="KW-0067">ATP-binding</keyword>
<keyword id="KW-0119">Carbohydrate metabolism</keyword>
<keyword id="KW-0963">Cytoplasm</keyword>
<keyword id="KW-0418">Kinase</keyword>
<keyword id="KW-0460">Magnesium</keyword>
<keyword id="KW-0479">Metal-binding</keyword>
<keyword id="KW-0547">Nucleotide-binding</keyword>
<keyword id="KW-0539">Nucleus</keyword>
<keyword id="KW-0630">Potassium</keyword>
<keyword id="KW-1185">Reference proteome</keyword>
<keyword id="KW-0808">Transferase</keyword>
<protein>
    <recommendedName>
        <fullName evidence="1 2">Ribokinase</fullName>
        <shortName evidence="2">RK</shortName>
        <ecNumber evidence="1 2">2.7.1.15</ecNumber>
    </recommendedName>
</protein>
<gene>
    <name evidence="4" type="primary">rbk1</name>
    <name evidence="4" type="ORF">SPBC16G5.02c</name>
</gene>
<name>RBSK_SCHPO</name>
<organism>
    <name type="scientific">Schizosaccharomyces pombe (strain 972 / ATCC 24843)</name>
    <name type="common">Fission yeast</name>
    <dbReference type="NCBI Taxonomy" id="284812"/>
    <lineage>
        <taxon>Eukaryota</taxon>
        <taxon>Fungi</taxon>
        <taxon>Dikarya</taxon>
        <taxon>Ascomycota</taxon>
        <taxon>Taphrinomycotina</taxon>
        <taxon>Schizosaccharomycetes</taxon>
        <taxon>Schizosaccharomycetales</taxon>
        <taxon>Schizosaccharomycetaceae</taxon>
        <taxon>Schizosaccharomyces</taxon>
    </lineage>
</organism>
<comment type="function">
    <text evidence="2">Catalyzes the phosphorylation of ribose at O-5 in a reaction requiring ATP and magnesium. The resulting D-ribose-5-phosphate can then be used either for sythesis of nucleotides, histidine, and tryptophan, or as a component of the pentose phosphate pathway.</text>
</comment>
<comment type="catalytic activity">
    <reaction evidence="2">
        <text>D-ribose + ATP = D-ribose 5-phosphate + ADP + H(+)</text>
        <dbReference type="Rhea" id="RHEA:13697"/>
        <dbReference type="ChEBI" id="CHEBI:15378"/>
        <dbReference type="ChEBI" id="CHEBI:30616"/>
        <dbReference type="ChEBI" id="CHEBI:47013"/>
        <dbReference type="ChEBI" id="CHEBI:78346"/>
        <dbReference type="ChEBI" id="CHEBI:456216"/>
        <dbReference type="EC" id="2.7.1.15"/>
    </reaction>
</comment>
<comment type="cofactor">
    <cofactor evidence="2">
        <name>Mg(2+)</name>
        <dbReference type="ChEBI" id="CHEBI:18420"/>
    </cofactor>
    <text evidence="2">Requires a divalent cation, most likely magnesium in vivo, as an electrophilic catalyst to aid phosphoryl group transfer. It is the chelate of the metal and the nucleotide that is the actual substrate.</text>
</comment>
<comment type="activity regulation">
    <text evidence="2">Activated by a monovalent cation that binds near, but not in, the active site. The most likely occupant of the site in vivo is potassium. Ion binding induces a conformational change that may alter substrate affinity.</text>
</comment>
<comment type="pathway">
    <text evidence="2">Carbohydrate metabolism; D-ribose degradation; D-ribose 5-phosphate from beta-D-ribopyranose: step 2/2.</text>
</comment>
<comment type="subunit">
    <text evidence="2">Homodimer.</text>
</comment>
<comment type="subcellular location">
    <subcellularLocation>
        <location evidence="2 3">Cytoplasm</location>
    </subcellularLocation>
    <subcellularLocation>
        <location evidence="2 3">Nucleus</location>
    </subcellularLocation>
</comment>
<comment type="similarity">
    <text evidence="2">Belongs to the carbohydrate kinase PfkB family. Ribokinase subfamily.</text>
</comment>
<evidence type="ECO:0000250" key="1">
    <source>
        <dbReference type="UniProtKB" id="P0A9J6"/>
    </source>
</evidence>
<evidence type="ECO:0000255" key="2">
    <source>
        <dbReference type="HAMAP-Rule" id="MF_03215"/>
    </source>
</evidence>
<evidence type="ECO:0000269" key="3">
    <source>
    </source>
</evidence>
<evidence type="ECO:0000312" key="4">
    <source>
        <dbReference type="PomBase" id="SPBC16G5.02c"/>
    </source>
</evidence>
<dbReference type="EC" id="2.7.1.15" evidence="1 2"/>
<dbReference type="EMBL" id="CU329671">
    <property type="protein sequence ID" value="CAA19022.1"/>
    <property type="molecule type" value="Genomic_DNA"/>
</dbReference>
<dbReference type="PIR" id="T39594">
    <property type="entry name" value="T39594"/>
</dbReference>
<dbReference type="RefSeq" id="NP_596751.1">
    <property type="nucleotide sequence ID" value="NM_001023771.2"/>
</dbReference>
<dbReference type="SMR" id="O60116"/>
<dbReference type="BioGRID" id="276372">
    <property type="interactions" value="14"/>
</dbReference>
<dbReference type="FunCoup" id="O60116">
    <property type="interactions" value="106"/>
</dbReference>
<dbReference type="STRING" id="284812.O60116"/>
<dbReference type="PaxDb" id="4896-SPBC16G5.02c.1"/>
<dbReference type="EnsemblFungi" id="SPBC16G5.02c.1">
    <property type="protein sequence ID" value="SPBC16G5.02c.1:pep"/>
    <property type="gene ID" value="SPBC16G5.02c"/>
</dbReference>
<dbReference type="GeneID" id="2539822"/>
<dbReference type="KEGG" id="spo:2539822"/>
<dbReference type="PomBase" id="SPBC16G5.02c">
    <property type="gene designation" value="rbk1"/>
</dbReference>
<dbReference type="VEuPathDB" id="FungiDB:SPBC16G5.02c"/>
<dbReference type="eggNOG" id="KOG2855">
    <property type="taxonomic scope" value="Eukaryota"/>
</dbReference>
<dbReference type="HOGENOM" id="CLU_027634_2_0_1"/>
<dbReference type="InParanoid" id="O60116"/>
<dbReference type="OMA" id="DIVLIQQ"/>
<dbReference type="PhylomeDB" id="O60116"/>
<dbReference type="Reactome" id="R-SPO-71336">
    <property type="pathway name" value="Pentose phosphate pathway"/>
</dbReference>
<dbReference type="UniPathway" id="UPA00916">
    <property type="reaction ID" value="UER00889"/>
</dbReference>
<dbReference type="PRO" id="PR:O60116"/>
<dbReference type="Proteomes" id="UP000002485">
    <property type="component" value="Chromosome II"/>
</dbReference>
<dbReference type="GO" id="GO:0005829">
    <property type="term" value="C:cytosol"/>
    <property type="evidence" value="ECO:0007005"/>
    <property type="project" value="PomBase"/>
</dbReference>
<dbReference type="GO" id="GO:0005634">
    <property type="term" value="C:nucleus"/>
    <property type="evidence" value="ECO:0007005"/>
    <property type="project" value="PomBase"/>
</dbReference>
<dbReference type="GO" id="GO:0005524">
    <property type="term" value="F:ATP binding"/>
    <property type="evidence" value="ECO:0007669"/>
    <property type="project" value="UniProtKB-UniRule"/>
</dbReference>
<dbReference type="GO" id="GO:0046872">
    <property type="term" value="F:metal ion binding"/>
    <property type="evidence" value="ECO:0007669"/>
    <property type="project" value="UniProtKB-KW"/>
</dbReference>
<dbReference type="GO" id="GO:0004747">
    <property type="term" value="F:ribokinase activity"/>
    <property type="evidence" value="ECO:0000266"/>
    <property type="project" value="PomBase"/>
</dbReference>
<dbReference type="GO" id="GO:0019303">
    <property type="term" value="P:D-ribose catabolic process"/>
    <property type="evidence" value="ECO:0007669"/>
    <property type="project" value="UniProtKB-UniRule"/>
</dbReference>
<dbReference type="CDD" id="cd01174">
    <property type="entry name" value="ribokinase"/>
    <property type="match status" value="1"/>
</dbReference>
<dbReference type="Gene3D" id="3.40.1190.20">
    <property type="match status" value="1"/>
</dbReference>
<dbReference type="HAMAP" id="MF_01987">
    <property type="entry name" value="Ribokinase"/>
    <property type="match status" value="1"/>
</dbReference>
<dbReference type="InterPro" id="IPR002173">
    <property type="entry name" value="Carboh/pur_kinase_PfkB_CS"/>
</dbReference>
<dbReference type="InterPro" id="IPR011611">
    <property type="entry name" value="PfkB_dom"/>
</dbReference>
<dbReference type="InterPro" id="IPR002139">
    <property type="entry name" value="Ribo/fructo_kinase"/>
</dbReference>
<dbReference type="InterPro" id="IPR011877">
    <property type="entry name" value="Ribokinase"/>
</dbReference>
<dbReference type="InterPro" id="IPR029056">
    <property type="entry name" value="Ribokinase-like"/>
</dbReference>
<dbReference type="NCBIfam" id="TIGR02152">
    <property type="entry name" value="D_ribokin_bact"/>
    <property type="match status" value="1"/>
</dbReference>
<dbReference type="PANTHER" id="PTHR10584:SF166">
    <property type="entry name" value="RIBOKINASE"/>
    <property type="match status" value="1"/>
</dbReference>
<dbReference type="PANTHER" id="PTHR10584">
    <property type="entry name" value="SUGAR KINASE"/>
    <property type="match status" value="1"/>
</dbReference>
<dbReference type="Pfam" id="PF00294">
    <property type="entry name" value="PfkB"/>
    <property type="match status" value="1"/>
</dbReference>
<dbReference type="PRINTS" id="PR00990">
    <property type="entry name" value="RIBOKINASE"/>
</dbReference>
<dbReference type="SUPFAM" id="SSF53613">
    <property type="entry name" value="Ribokinase-like"/>
    <property type="match status" value="1"/>
</dbReference>
<dbReference type="PROSITE" id="PS00584">
    <property type="entry name" value="PFKB_KINASES_2"/>
    <property type="match status" value="1"/>
</dbReference>
<feature type="chain" id="PRO_0000080093" description="Ribokinase">
    <location>
        <begin position="1"/>
        <end position="318"/>
    </location>
</feature>
<feature type="active site" description="Proton acceptor" evidence="2">
    <location>
        <position position="262"/>
    </location>
</feature>
<feature type="binding site" evidence="2">
    <location>
        <begin position="11"/>
        <end position="13"/>
    </location>
    <ligand>
        <name>substrate</name>
    </ligand>
</feature>
<feature type="binding site" evidence="2">
    <location>
        <begin position="41"/>
        <end position="45"/>
    </location>
    <ligand>
        <name>substrate</name>
    </ligand>
</feature>
<feature type="binding site" evidence="2">
    <location>
        <position position="146"/>
    </location>
    <ligand>
        <name>substrate</name>
    </ligand>
</feature>
<feature type="binding site" evidence="2">
    <location>
        <position position="190"/>
    </location>
    <ligand>
        <name>ATP</name>
        <dbReference type="ChEBI" id="CHEBI:30616"/>
    </ligand>
</feature>
<feature type="binding site" evidence="2">
    <location>
        <begin position="229"/>
        <end position="234"/>
    </location>
    <ligand>
        <name>ATP</name>
        <dbReference type="ChEBI" id="CHEBI:30616"/>
    </ligand>
</feature>
<feature type="binding site" evidence="2">
    <location>
        <position position="256"/>
    </location>
    <ligand>
        <name>K(+)</name>
        <dbReference type="ChEBI" id="CHEBI:29103"/>
    </ligand>
</feature>
<feature type="binding site" evidence="2">
    <location>
        <position position="258"/>
    </location>
    <ligand>
        <name>K(+)</name>
        <dbReference type="ChEBI" id="CHEBI:29103"/>
    </ligand>
</feature>
<feature type="binding site" evidence="2">
    <location>
        <begin position="261"/>
        <end position="262"/>
    </location>
    <ligand>
        <name>ATP</name>
        <dbReference type="ChEBI" id="CHEBI:30616"/>
    </ligand>
</feature>
<feature type="binding site" evidence="2">
    <location>
        <position position="262"/>
    </location>
    <ligand>
        <name>substrate</name>
    </ligand>
</feature>
<feature type="binding site" evidence="2">
    <location>
        <position position="292"/>
    </location>
    <ligand>
        <name>K(+)</name>
        <dbReference type="ChEBI" id="CHEBI:29103"/>
    </ligand>
</feature>
<feature type="binding site" evidence="2">
    <location>
        <position position="295"/>
    </location>
    <ligand>
        <name>K(+)</name>
        <dbReference type="ChEBI" id="CHEBI:29103"/>
    </ligand>
</feature>
<feature type="binding site" evidence="2">
    <location>
        <position position="297"/>
    </location>
    <ligand>
        <name>K(+)</name>
        <dbReference type="ChEBI" id="CHEBI:29103"/>
    </ligand>
</feature>
<feature type="binding site" evidence="2">
    <location>
        <position position="301"/>
    </location>
    <ligand>
        <name>K(+)</name>
        <dbReference type="ChEBI" id="CHEBI:29103"/>
    </ligand>
</feature>